<keyword id="KW-0687">Ribonucleoprotein</keyword>
<keyword id="KW-0689">Ribosomal protein</keyword>
<sequence length="102" mass="11705">MDRQNIRIRLKAFDHRVLDHSTREIVNTAKRTGATVRGPIPLPTLIEKFTVNRSPHVDKKSREQFEIRTHKRVLDIVDPTPQTVDALMKLDLSAGVDVEIKL</sequence>
<evidence type="ECO:0000255" key="1">
    <source>
        <dbReference type="HAMAP-Rule" id="MF_00508"/>
    </source>
</evidence>
<evidence type="ECO:0000305" key="2"/>
<reference key="1">
    <citation type="submission" date="2008-01" db="EMBL/GenBank/DDBJ databases">
        <title>Complete sequence of chromosome of Caulobacter sp. K31.</title>
        <authorList>
            <consortium name="US DOE Joint Genome Institute"/>
            <person name="Copeland A."/>
            <person name="Lucas S."/>
            <person name="Lapidus A."/>
            <person name="Barry K."/>
            <person name="Glavina del Rio T."/>
            <person name="Dalin E."/>
            <person name="Tice H."/>
            <person name="Pitluck S."/>
            <person name="Bruce D."/>
            <person name="Goodwin L."/>
            <person name="Thompson L.S."/>
            <person name="Brettin T."/>
            <person name="Detter J.C."/>
            <person name="Han C."/>
            <person name="Schmutz J."/>
            <person name="Larimer F."/>
            <person name="Land M."/>
            <person name="Hauser L."/>
            <person name="Kyrpides N."/>
            <person name="Kim E."/>
            <person name="Stephens C."/>
            <person name="Richardson P."/>
        </authorList>
    </citation>
    <scope>NUCLEOTIDE SEQUENCE [LARGE SCALE GENOMIC DNA]</scope>
    <source>
        <strain>K31</strain>
    </source>
</reference>
<dbReference type="EMBL" id="CP000927">
    <property type="protein sequence ID" value="ABZ70742.1"/>
    <property type="molecule type" value="Genomic_DNA"/>
</dbReference>
<dbReference type="SMR" id="B0T2C1"/>
<dbReference type="STRING" id="366602.Caul_1613"/>
<dbReference type="KEGG" id="cak:Caul_1613"/>
<dbReference type="eggNOG" id="COG0051">
    <property type="taxonomic scope" value="Bacteria"/>
</dbReference>
<dbReference type="HOGENOM" id="CLU_122625_1_3_5"/>
<dbReference type="OrthoDB" id="9804464at2"/>
<dbReference type="GO" id="GO:1990904">
    <property type="term" value="C:ribonucleoprotein complex"/>
    <property type="evidence" value="ECO:0007669"/>
    <property type="project" value="UniProtKB-KW"/>
</dbReference>
<dbReference type="GO" id="GO:0005840">
    <property type="term" value="C:ribosome"/>
    <property type="evidence" value="ECO:0007669"/>
    <property type="project" value="UniProtKB-KW"/>
</dbReference>
<dbReference type="GO" id="GO:0003735">
    <property type="term" value="F:structural constituent of ribosome"/>
    <property type="evidence" value="ECO:0007669"/>
    <property type="project" value="InterPro"/>
</dbReference>
<dbReference type="GO" id="GO:0000049">
    <property type="term" value="F:tRNA binding"/>
    <property type="evidence" value="ECO:0007669"/>
    <property type="project" value="UniProtKB-UniRule"/>
</dbReference>
<dbReference type="GO" id="GO:0006412">
    <property type="term" value="P:translation"/>
    <property type="evidence" value="ECO:0007669"/>
    <property type="project" value="UniProtKB-UniRule"/>
</dbReference>
<dbReference type="FunFam" id="3.30.70.600:FF:000001">
    <property type="entry name" value="30S ribosomal protein S10"/>
    <property type="match status" value="1"/>
</dbReference>
<dbReference type="Gene3D" id="3.30.70.600">
    <property type="entry name" value="Ribosomal protein S10 domain"/>
    <property type="match status" value="1"/>
</dbReference>
<dbReference type="HAMAP" id="MF_00508">
    <property type="entry name" value="Ribosomal_uS10"/>
    <property type="match status" value="1"/>
</dbReference>
<dbReference type="InterPro" id="IPR001848">
    <property type="entry name" value="Ribosomal_uS10"/>
</dbReference>
<dbReference type="InterPro" id="IPR018268">
    <property type="entry name" value="Ribosomal_uS10_CS"/>
</dbReference>
<dbReference type="InterPro" id="IPR027486">
    <property type="entry name" value="Ribosomal_uS10_dom"/>
</dbReference>
<dbReference type="InterPro" id="IPR036838">
    <property type="entry name" value="Ribosomal_uS10_dom_sf"/>
</dbReference>
<dbReference type="NCBIfam" id="NF001861">
    <property type="entry name" value="PRK00596.1"/>
    <property type="match status" value="1"/>
</dbReference>
<dbReference type="NCBIfam" id="TIGR01049">
    <property type="entry name" value="rpsJ_bact"/>
    <property type="match status" value="1"/>
</dbReference>
<dbReference type="PANTHER" id="PTHR11700">
    <property type="entry name" value="30S RIBOSOMAL PROTEIN S10 FAMILY MEMBER"/>
    <property type="match status" value="1"/>
</dbReference>
<dbReference type="Pfam" id="PF00338">
    <property type="entry name" value="Ribosomal_S10"/>
    <property type="match status" value="1"/>
</dbReference>
<dbReference type="PRINTS" id="PR00971">
    <property type="entry name" value="RIBOSOMALS10"/>
</dbReference>
<dbReference type="SMART" id="SM01403">
    <property type="entry name" value="Ribosomal_S10"/>
    <property type="match status" value="1"/>
</dbReference>
<dbReference type="SUPFAM" id="SSF54999">
    <property type="entry name" value="Ribosomal protein S10"/>
    <property type="match status" value="1"/>
</dbReference>
<dbReference type="PROSITE" id="PS00361">
    <property type="entry name" value="RIBOSOMAL_S10"/>
    <property type="match status" value="1"/>
</dbReference>
<proteinExistence type="inferred from homology"/>
<accession>B0T2C1</accession>
<organism>
    <name type="scientific">Caulobacter sp. (strain K31)</name>
    <dbReference type="NCBI Taxonomy" id="366602"/>
    <lineage>
        <taxon>Bacteria</taxon>
        <taxon>Pseudomonadati</taxon>
        <taxon>Pseudomonadota</taxon>
        <taxon>Alphaproteobacteria</taxon>
        <taxon>Caulobacterales</taxon>
        <taxon>Caulobacteraceae</taxon>
        <taxon>Caulobacter</taxon>
    </lineage>
</organism>
<feature type="chain" id="PRO_1000081540" description="Small ribosomal subunit protein uS10">
    <location>
        <begin position="1"/>
        <end position="102"/>
    </location>
</feature>
<protein>
    <recommendedName>
        <fullName evidence="1">Small ribosomal subunit protein uS10</fullName>
    </recommendedName>
    <alternativeName>
        <fullName evidence="2">30S ribosomal protein S10</fullName>
    </alternativeName>
</protein>
<name>RS10_CAUSK</name>
<comment type="function">
    <text evidence="1">Involved in the binding of tRNA to the ribosomes.</text>
</comment>
<comment type="subunit">
    <text evidence="1">Part of the 30S ribosomal subunit.</text>
</comment>
<comment type="similarity">
    <text evidence="1">Belongs to the universal ribosomal protein uS10 family.</text>
</comment>
<gene>
    <name evidence="1" type="primary">rpsJ</name>
    <name type="ordered locus">Caul_1613</name>
</gene>